<sequence>MVVNRALLASVDALSRDEQIELVEHINGNLAEGMHISEANQALIEARANDTDDAHWSTIDDFDKRIRARLG</sequence>
<keyword id="KW-0002">3D-structure</keyword>
<keyword id="KW-1185">Reference proteome</keyword>
<keyword id="KW-1277">Toxin-antitoxin system</keyword>
<gene>
    <name type="primary">parD2</name>
    <name type="ordered locus">Rv2142A</name>
</gene>
<comment type="function">
    <text evidence="1">Antitoxin component of a type II toxin-antitoxin (TA) system. Upon expression in E.coli neutralizes the effect of cognate toxin ParE2.</text>
</comment>
<reference key="1">
    <citation type="journal article" date="1998" name="Nature">
        <title>Deciphering the biology of Mycobacterium tuberculosis from the complete genome sequence.</title>
        <authorList>
            <person name="Cole S.T."/>
            <person name="Brosch R."/>
            <person name="Parkhill J."/>
            <person name="Garnier T."/>
            <person name="Churcher C.M."/>
            <person name="Harris D.E."/>
            <person name="Gordon S.V."/>
            <person name="Eiglmeier K."/>
            <person name="Gas S."/>
            <person name="Barry C.E. III"/>
            <person name="Tekaia F."/>
            <person name="Badcock K."/>
            <person name="Basham D."/>
            <person name="Brown D."/>
            <person name="Chillingworth T."/>
            <person name="Connor R."/>
            <person name="Davies R.M."/>
            <person name="Devlin K."/>
            <person name="Feltwell T."/>
            <person name="Gentles S."/>
            <person name="Hamlin N."/>
            <person name="Holroyd S."/>
            <person name="Hornsby T."/>
            <person name="Jagels K."/>
            <person name="Krogh A."/>
            <person name="McLean J."/>
            <person name="Moule S."/>
            <person name="Murphy L.D."/>
            <person name="Oliver S."/>
            <person name="Osborne J."/>
            <person name="Quail M.A."/>
            <person name="Rajandream M.A."/>
            <person name="Rogers J."/>
            <person name="Rutter S."/>
            <person name="Seeger K."/>
            <person name="Skelton S."/>
            <person name="Squares S."/>
            <person name="Squares R."/>
            <person name="Sulston J.E."/>
            <person name="Taylor K."/>
            <person name="Whitehead S."/>
            <person name="Barrell B.G."/>
        </authorList>
    </citation>
    <scope>NUCLEOTIDE SEQUENCE [LARGE SCALE GENOMIC DNA]</scope>
    <source>
        <strain>ATCC 25618 / H37Rv</strain>
    </source>
</reference>
<reference key="2">
    <citation type="journal article" date="2005" name="Nucleic Acids Res.">
        <title>Toxin-antitoxin loci are highly abundant in free-living but lost from host-associated prokaryotes.</title>
        <authorList>
            <person name="Pandey D.P."/>
            <person name="Gerdes K."/>
        </authorList>
    </citation>
    <scope>IDENTIFICATION</scope>
    <scope>POSSIBLE FUNCTION</scope>
    <source>
        <strain>ATCC 25618 / H37Rv</strain>
    </source>
</reference>
<reference key="3">
    <citation type="journal article" date="2009" name="FEMS Microbiol. Lett.">
        <title>Killing activity and rescue function of genome-wide toxin-antitoxin loci of Mycobacterium tuberculosis.</title>
        <authorList>
            <person name="Gupta A."/>
        </authorList>
    </citation>
    <scope>EXPRESSION IN E.COLI</scope>
    <scope>FUNCTION AS AN ANTITOXIN</scope>
    <source>
        <strain>ATCC 25618 / H37Rv</strain>
    </source>
</reference>
<proteinExistence type="evidence at protein level"/>
<name>PARD2_MYCTU</name>
<accession>P9WJ75</accession>
<accession>F2GKH5</accession>
<accession>P0CW73</accession>
<accession>Q8VJP5</accession>
<dbReference type="EMBL" id="AL123456">
    <property type="protein sequence ID" value="CCP44918.1"/>
    <property type="molecule type" value="Genomic_DNA"/>
</dbReference>
<dbReference type="RefSeq" id="WP_003411127.1">
    <property type="nucleotide sequence ID" value="NZ_NVQJ01000044.1"/>
</dbReference>
<dbReference type="RefSeq" id="YP_007410825.1">
    <property type="nucleotide sequence ID" value="NC_000962.3"/>
</dbReference>
<dbReference type="PDB" id="8C26">
    <property type="method" value="X-ray"/>
    <property type="resolution" value="2.35 A"/>
    <property type="chains" value="B=1-71"/>
</dbReference>
<dbReference type="PDBsum" id="8C26"/>
<dbReference type="SMR" id="P9WJ75"/>
<dbReference type="STRING" id="83332.Rv2142A"/>
<dbReference type="PaxDb" id="83332-Rv2142A"/>
<dbReference type="GeneID" id="14515895"/>
<dbReference type="KEGG" id="mtu:Rv2142A"/>
<dbReference type="KEGG" id="mtv:RVBD_2142A"/>
<dbReference type="TubercuList" id="Rv2142A"/>
<dbReference type="InParanoid" id="P9WJ75"/>
<dbReference type="Proteomes" id="UP000001584">
    <property type="component" value="Chromosome"/>
</dbReference>
<dbReference type="GO" id="GO:0097351">
    <property type="term" value="F:toxin sequestering activity"/>
    <property type="evidence" value="ECO:0000353"/>
    <property type="project" value="MTBBASE"/>
</dbReference>
<dbReference type="GO" id="GO:0098754">
    <property type="term" value="P:detoxification"/>
    <property type="evidence" value="ECO:0000315"/>
    <property type="project" value="MTBBASE"/>
</dbReference>
<dbReference type="InterPro" id="IPR013406">
    <property type="entry name" value="CHP02574_addiction_mod"/>
</dbReference>
<dbReference type="NCBIfam" id="TIGR02574">
    <property type="entry name" value="stabl_TIGR02574"/>
    <property type="match status" value="1"/>
</dbReference>
<organism>
    <name type="scientific">Mycobacterium tuberculosis (strain ATCC 25618 / H37Rv)</name>
    <dbReference type="NCBI Taxonomy" id="83332"/>
    <lineage>
        <taxon>Bacteria</taxon>
        <taxon>Bacillati</taxon>
        <taxon>Actinomycetota</taxon>
        <taxon>Actinomycetes</taxon>
        <taxon>Mycobacteriales</taxon>
        <taxon>Mycobacteriaceae</taxon>
        <taxon>Mycobacterium</taxon>
        <taxon>Mycobacterium tuberculosis complex</taxon>
    </lineage>
</organism>
<feature type="chain" id="PRO_0000408461" description="Antitoxin ParD2">
    <location>
        <begin position="1"/>
        <end position="71"/>
    </location>
</feature>
<feature type="helix" evidence="2">
    <location>
        <begin position="38"/>
        <end position="49"/>
    </location>
</feature>
<feature type="helix" evidence="2">
    <location>
        <begin position="53"/>
        <end position="55"/>
    </location>
</feature>
<feature type="strand" evidence="2">
    <location>
        <begin position="56"/>
        <end position="58"/>
    </location>
</feature>
<feature type="helix" evidence="2">
    <location>
        <begin position="59"/>
        <end position="68"/>
    </location>
</feature>
<protein>
    <recommendedName>
        <fullName>Antitoxin ParD2</fullName>
    </recommendedName>
</protein>
<evidence type="ECO:0000269" key="1">
    <source>
    </source>
</evidence>
<evidence type="ECO:0007829" key="2">
    <source>
        <dbReference type="PDB" id="8C26"/>
    </source>
</evidence>